<feature type="signal peptide" evidence="1">
    <location>
        <begin position="1"/>
        <end position="27"/>
    </location>
</feature>
<feature type="chain" id="PRO_1000129144" description="Alginate lyase">
    <location>
        <begin position="28"/>
        <end position="367"/>
    </location>
</feature>
<feature type="binding site" evidence="1">
    <location>
        <begin position="65"/>
        <end position="66"/>
    </location>
    <ligand>
        <name>substrate</name>
    </ligand>
</feature>
<feature type="binding site" evidence="1">
    <location>
        <begin position="138"/>
        <end position="139"/>
    </location>
    <ligand>
        <name>substrate</name>
    </ligand>
</feature>
<feature type="binding site" evidence="1">
    <location>
        <position position="256"/>
    </location>
    <ligand>
        <name>substrate</name>
    </ligand>
</feature>
<accession>B7UUU9</accession>
<gene>
    <name evidence="1" type="primary">algL</name>
    <name type="ordered locus">PLES_14861</name>
</gene>
<name>ALGL_PSEA8</name>
<reference key="1">
    <citation type="journal article" date="2009" name="Genome Res.">
        <title>Newly introduced genomic prophage islands are critical determinants of in vivo competitiveness in the Liverpool epidemic strain of Pseudomonas aeruginosa.</title>
        <authorList>
            <person name="Winstanley C."/>
            <person name="Langille M.G.I."/>
            <person name="Fothergill J.L."/>
            <person name="Kukavica-Ibrulj I."/>
            <person name="Paradis-Bleau C."/>
            <person name="Sanschagrin F."/>
            <person name="Thomson N.R."/>
            <person name="Winsor G.L."/>
            <person name="Quail M.A."/>
            <person name="Lennard N."/>
            <person name="Bignell A."/>
            <person name="Clarke L."/>
            <person name="Seeger K."/>
            <person name="Saunders D."/>
            <person name="Harris D."/>
            <person name="Parkhill J."/>
            <person name="Hancock R.E.W."/>
            <person name="Brinkman F.S.L."/>
            <person name="Levesque R.C."/>
        </authorList>
    </citation>
    <scope>NUCLEOTIDE SEQUENCE [LARGE SCALE GENOMIC DNA]</scope>
    <source>
        <strain>LESB58</strain>
    </source>
</reference>
<proteinExistence type="inferred from homology"/>
<protein>
    <recommendedName>
        <fullName evidence="1">Alginate lyase</fullName>
        <ecNumber evidence="1">4.2.2.3</ecNumber>
    </recommendedName>
    <alternativeName>
        <fullName evidence="1">Poly(beta-D-mannuronate) lyase</fullName>
    </alternativeName>
</protein>
<sequence>MKTSHLIRIALPGALAAALLASQVSQAADLVPPPGYYAAVGERKGNAGSCPAVPPPYTGSLVFTSKYEGSDSARATLNVKAEKTFRSQIKDITDMERGATKLVTQYMRSGRDGDLACALNWMSTWARAGALQSDDFNHTGKSMRKWALGSLSGAYMRLKFSSSRPLAAHAEQSREIEDWFARLGTQVVRDWSGLPLKKINNHSYWAAWSVMSTAVVTNRRDLFDWAVSEFKVAANQVDEQGFLPNELKRRQRALAYHNYALPPLAMIAAFAQVNGVDLRQENHGALQRLAERVMKGVDDEETFEEKTGEDQDMTDLKVDNKYAWLEPYCALYRCEPKMLEAKKDREPFNSFRLGGEVTRVFSREGGS</sequence>
<dbReference type="EC" id="4.2.2.3" evidence="1"/>
<dbReference type="EMBL" id="FM209186">
    <property type="protein sequence ID" value="CAW26214.1"/>
    <property type="molecule type" value="Genomic_DNA"/>
</dbReference>
<dbReference type="RefSeq" id="WP_012613747.1">
    <property type="nucleotide sequence ID" value="NC_011770.1"/>
</dbReference>
<dbReference type="SMR" id="B7UUU9"/>
<dbReference type="CAZy" id="PL5">
    <property type="family name" value="Polysaccharide Lyase Family 5"/>
</dbReference>
<dbReference type="KEGG" id="pag:PLES_14861"/>
<dbReference type="HOGENOM" id="CLU_064286_0_0_6"/>
<dbReference type="GO" id="GO:0042597">
    <property type="term" value="C:periplasmic space"/>
    <property type="evidence" value="ECO:0007669"/>
    <property type="project" value="UniProtKB-SubCell"/>
</dbReference>
<dbReference type="GO" id="GO:0045135">
    <property type="term" value="F:poly(beta-D-mannuronate) lyase activity"/>
    <property type="evidence" value="ECO:0007669"/>
    <property type="project" value="UniProtKB-UniRule"/>
</dbReference>
<dbReference type="GO" id="GO:0042122">
    <property type="term" value="P:alginic acid catabolic process"/>
    <property type="evidence" value="ECO:0007669"/>
    <property type="project" value="UniProtKB-UniRule"/>
</dbReference>
<dbReference type="CDD" id="cd00244">
    <property type="entry name" value="AlgLyase"/>
    <property type="match status" value="1"/>
</dbReference>
<dbReference type="FunFam" id="1.50.10.100:FF:000002">
    <property type="entry name" value="Alginate lyase"/>
    <property type="match status" value="1"/>
</dbReference>
<dbReference type="Gene3D" id="1.50.10.100">
    <property type="entry name" value="Chondroitin AC/alginate lyase"/>
    <property type="match status" value="1"/>
</dbReference>
<dbReference type="HAMAP" id="MF_00557">
    <property type="entry name" value="Alginate_lyase"/>
    <property type="match status" value="1"/>
</dbReference>
<dbReference type="InterPro" id="IPR022859">
    <property type="entry name" value="Alginate_lyase"/>
</dbReference>
<dbReference type="InterPro" id="IPR008397">
    <property type="entry name" value="Alginate_lyase_dom"/>
</dbReference>
<dbReference type="InterPro" id="IPR008929">
    <property type="entry name" value="Chondroitin_lyas"/>
</dbReference>
<dbReference type="NCBIfam" id="NF001467">
    <property type="entry name" value="PRK00325.1-2"/>
    <property type="match status" value="1"/>
</dbReference>
<dbReference type="Pfam" id="PF05426">
    <property type="entry name" value="Alginate_lyase"/>
    <property type="match status" value="1"/>
</dbReference>
<dbReference type="SUPFAM" id="SSF48230">
    <property type="entry name" value="Chondroitin AC/alginate lyase"/>
    <property type="match status" value="1"/>
</dbReference>
<comment type="function">
    <text evidence="1">Catalyzes the depolymerization of alginate by cleaving the beta-1,4 glycosidic bond between two adjacent sugar residues via a beta-elimination mechanism. May serve to degrade mislocalized alginate that is trapped in the periplasmic space.</text>
</comment>
<comment type="catalytic activity">
    <reaction evidence="1">
        <text>Eliminative cleavage of alginate to give oligosaccharides with 4-deoxy-alpha-L-erythro-hex-4-enuronosyl groups at their non-reducing ends and beta-D-mannuronate at their reducing end.</text>
        <dbReference type="EC" id="4.2.2.3"/>
    </reaction>
</comment>
<comment type="subcellular location">
    <subcellularLocation>
        <location evidence="1">Periplasm</location>
    </subcellularLocation>
</comment>
<comment type="similarity">
    <text evidence="1">Belongs to the polysaccharide lyase 5 family.</text>
</comment>
<keyword id="KW-0456">Lyase</keyword>
<keyword id="KW-0574">Periplasm</keyword>
<keyword id="KW-0732">Signal</keyword>
<organism>
    <name type="scientific">Pseudomonas aeruginosa (strain LESB58)</name>
    <dbReference type="NCBI Taxonomy" id="557722"/>
    <lineage>
        <taxon>Bacteria</taxon>
        <taxon>Pseudomonadati</taxon>
        <taxon>Pseudomonadota</taxon>
        <taxon>Gammaproteobacteria</taxon>
        <taxon>Pseudomonadales</taxon>
        <taxon>Pseudomonadaceae</taxon>
        <taxon>Pseudomonas</taxon>
    </lineage>
</organism>
<evidence type="ECO:0000255" key="1">
    <source>
        <dbReference type="HAMAP-Rule" id="MF_00557"/>
    </source>
</evidence>